<reference key="1">
    <citation type="submission" date="2006-08" db="EMBL/GenBank/DDBJ databases">
        <title>Complete sequence of chromosome 1 of Burkholderia cenocepacia HI2424.</title>
        <authorList>
            <person name="Copeland A."/>
            <person name="Lucas S."/>
            <person name="Lapidus A."/>
            <person name="Barry K."/>
            <person name="Detter J.C."/>
            <person name="Glavina del Rio T."/>
            <person name="Hammon N."/>
            <person name="Israni S."/>
            <person name="Pitluck S."/>
            <person name="Chain P."/>
            <person name="Malfatti S."/>
            <person name="Shin M."/>
            <person name="Vergez L."/>
            <person name="Schmutz J."/>
            <person name="Larimer F."/>
            <person name="Land M."/>
            <person name="Hauser L."/>
            <person name="Kyrpides N."/>
            <person name="Kim E."/>
            <person name="LiPuma J.J."/>
            <person name="Gonzalez C.F."/>
            <person name="Konstantinidis K."/>
            <person name="Tiedje J.M."/>
            <person name="Richardson P."/>
        </authorList>
    </citation>
    <scope>NUCLEOTIDE SEQUENCE [LARGE SCALE GENOMIC DNA]</scope>
    <source>
        <strain>HI2424</strain>
    </source>
</reference>
<feature type="chain" id="PRO_1000015358" description="Large-conductance mechanosensitive channel">
    <location>
        <begin position="1"/>
        <end position="143"/>
    </location>
</feature>
<feature type="transmembrane region" description="Helical" evidence="1">
    <location>
        <begin position="10"/>
        <end position="30"/>
    </location>
</feature>
<feature type="transmembrane region" description="Helical" evidence="1">
    <location>
        <begin position="89"/>
        <end position="109"/>
    </location>
</feature>
<protein>
    <recommendedName>
        <fullName evidence="1">Large-conductance mechanosensitive channel</fullName>
    </recommendedName>
</protein>
<dbReference type="EMBL" id="CP000458">
    <property type="protein sequence ID" value="ABK08702.1"/>
    <property type="molecule type" value="Genomic_DNA"/>
</dbReference>
<dbReference type="RefSeq" id="WP_006478553.1">
    <property type="nucleotide sequence ID" value="NC_008542.1"/>
</dbReference>
<dbReference type="KEGG" id="bch:Bcen2424_1951"/>
<dbReference type="HOGENOM" id="CLU_095787_0_1_4"/>
<dbReference type="GO" id="GO:0005886">
    <property type="term" value="C:plasma membrane"/>
    <property type="evidence" value="ECO:0007669"/>
    <property type="project" value="UniProtKB-SubCell"/>
</dbReference>
<dbReference type="GO" id="GO:0008381">
    <property type="term" value="F:mechanosensitive monoatomic ion channel activity"/>
    <property type="evidence" value="ECO:0007669"/>
    <property type="project" value="UniProtKB-UniRule"/>
</dbReference>
<dbReference type="Gene3D" id="1.10.1200.120">
    <property type="entry name" value="Large-conductance mechanosensitive channel, MscL, domain 1"/>
    <property type="match status" value="1"/>
</dbReference>
<dbReference type="HAMAP" id="MF_00115">
    <property type="entry name" value="MscL"/>
    <property type="match status" value="1"/>
</dbReference>
<dbReference type="InterPro" id="IPR019823">
    <property type="entry name" value="Mechanosensitive_channel_CS"/>
</dbReference>
<dbReference type="InterPro" id="IPR001185">
    <property type="entry name" value="MS_channel"/>
</dbReference>
<dbReference type="InterPro" id="IPR037673">
    <property type="entry name" value="MSC/AndL"/>
</dbReference>
<dbReference type="InterPro" id="IPR036019">
    <property type="entry name" value="MscL_channel"/>
</dbReference>
<dbReference type="NCBIfam" id="TIGR00220">
    <property type="entry name" value="mscL"/>
    <property type="match status" value="1"/>
</dbReference>
<dbReference type="NCBIfam" id="NF001843">
    <property type="entry name" value="PRK00567.1-4"/>
    <property type="match status" value="1"/>
</dbReference>
<dbReference type="NCBIfam" id="NF010557">
    <property type="entry name" value="PRK13952.1"/>
    <property type="match status" value="1"/>
</dbReference>
<dbReference type="PANTHER" id="PTHR30266:SF2">
    <property type="entry name" value="LARGE-CONDUCTANCE MECHANOSENSITIVE CHANNEL"/>
    <property type="match status" value="1"/>
</dbReference>
<dbReference type="PANTHER" id="PTHR30266">
    <property type="entry name" value="MECHANOSENSITIVE CHANNEL MSCL"/>
    <property type="match status" value="1"/>
</dbReference>
<dbReference type="Pfam" id="PF01741">
    <property type="entry name" value="MscL"/>
    <property type="match status" value="1"/>
</dbReference>
<dbReference type="PRINTS" id="PR01264">
    <property type="entry name" value="MECHCHANNEL"/>
</dbReference>
<dbReference type="SUPFAM" id="SSF81330">
    <property type="entry name" value="Gated mechanosensitive channel"/>
    <property type="match status" value="1"/>
</dbReference>
<dbReference type="PROSITE" id="PS01327">
    <property type="entry name" value="MSCL"/>
    <property type="match status" value="1"/>
</dbReference>
<evidence type="ECO:0000255" key="1">
    <source>
        <dbReference type="HAMAP-Rule" id="MF_00115"/>
    </source>
</evidence>
<sequence>MSIIKEFKEFAVKGNVMDLAVGVIIGGAFSKIVDSVVKDLIMPVIGVLTGGLDFSNKFVLLGTIPPSFKGNPDSFKDLQAAGVAAFGYGSFITVAINFVILAFIIFLMVKFINKLRKPEEAAPAATPEDVVLLREIRDSLKQR</sequence>
<proteinExistence type="inferred from homology"/>
<gene>
    <name evidence="1" type="primary">mscL</name>
    <name type="ordered locus">Bcen2424_1951</name>
</gene>
<organism>
    <name type="scientific">Burkholderia cenocepacia (strain HI2424)</name>
    <dbReference type="NCBI Taxonomy" id="331272"/>
    <lineage>
        <taxon>Bacteria</taxon>
        <taxon>Pseudomonadati</taxon>
        <taxon>Pseudomonadota</taxon>
        <taxon>Betaproteobacteria</taxon>
        <taxon>Burkholderiales</taxon>
        <taxon>Burkholderiaceae</taxon>
        <taxon>Burkholderia</taxon>
        <taxon>Burkholderia cepacia complex</taxon>
    </lineage>
</organism>
<name>MSCL_BURCH</name>
<keyword id="KW-0997">Cell inner membrane</keyword>
<keyword id="KW-1003">Cell membrane</keyword>
<keyword id="KW-0407">Ion channel</keyword>
<keyword id="KW-0406">Ion transport</keyword>
<keyword id="KW-0472">Membrane</keyword>
<keyword id="KW-0812">Transmembrane</keyword>
<keyword id="KW-1133">Transmembrane helix</keyword>
<keyword id="KW-0813">Transport</keyword>
<accession>A0K875</accession>
<comment type="function">
    <text evidence="1">Channel that opens in response to stretch forces in the membrane lipid bilayer. May participate in the regulation of osmotic pressure changes within the cell.</text>
</comment>
<comment type="subunit">
    <text evidence="1">Homopentamer.</text>
</comment>
<comment type="subcellular location">
    <subcellularLocation>
        <location evidence="1">Cell inner membrane</location>
        <topology evidence="1">Multi-pass membrane protein</topology>
    </subcellularLocation>
</comment>
<comment type="similarity">
    <text evidence="1">Belongs to the MscL family.</text>
</comment>